<organism>
    <name type="scientific">Human adenovirus D serotype 15/H9</name>
    <name type="common">HAdV-15/H9</name>
    <name type="synonym">Human adenovirus 15/H9</name>
    <dbReference type="NCBI Taxonomy" id="308444"/>
    <lineage>
        <taxon>Viruses</taxon>
        <taxon>Varidnaviria</taxon>
        <taxon>Bamfordvirae</taxon>
        <taxon>Preplasmiviricota</taxon>
        <taxon>Tectiliviricetes</taxon>
        <taxon>Rowavirales</taxon>
        <taxon>Adenoviridae</taxon>
        <taxon>Mastadenovirus</taxon>
        <taxon>Human mastadenovirus D</taxon>
    </lineage>
</organism>
<protein>
    <recommendedName>
        <fullName>Fiber protein</fullName>
        <shortName>SPIKE</shortName>
    </recommendedName>
    <alternativeName>
        <fullName>Protein IV</fullName>
    </alternativeName>
</protein>
<evidence type="ECO:0000250" key="1"/>
<evidence type="ECO:0000305" key="2"/>
<sequence length="362" mass="39420">MSKRLRVEDDFNPVYPYGYARNQNIPFLTPPFVSSDGFQNFPPGVLSLKLADPIAIVNGNVSLKVGGGLTLQDGTGKLTVNADPPLQLTNNKLGIALDAPFDVIDNKLTLLAGHGLSIITKETSTLPGLRNTLVVLTGKGIGTESTDNGGTVCVRVGEGGGLSFNNDGDLVAFNKKEDKRTLWTTPDTSPNCKIDQDKDSKLTLVLTKCGSQILANVSLIVVDGKYKIINNNTQPALKGFTIKLLFDENGVLMESSNLGKSYWNFRNENSIMSTAYEKAIGFMPNLVAYPKPTAGSKKYARDIVYGNIYLGGKPDQPVTIKTTFNQETGCEYSITFDFSWAKTYVNVEFETTSFTFSYIAQE</sequence>
<feature type="chain" id="PRO_0000221797" description="Fiber protein">
    <location>
        <begin position="1"/>
        <end position="362"/>
    </location>
</feature>
<accession>P68983</accession>
<accession>P36846</accession>
<proteinExistence type="evidence at transcript level"/>
<organismHost>
    <name type="scientific">Homo sapiens</name>
    <name type="common">Human</name>
    <dbReference type="NCBI Taxonomy" id="9606"/>
</organismHost>
<gene>
    <name type="ORF">L5</name>
</gene>
<name>SPIKE_ADE1H</name>
<keyword id="KW-0167">Capsid protein</keyword>
<keyword id="KW-1048">Host nucleus</keyword>
<keyword id="KW-0945">Host-virus interaction</keyword>
<keyword id="KW-0426">Late protein</keyword>
<keyword id="KW-1233">Viral attachment to host adhesion receptor</keyword>
<keyword id="KW-1161">Viral attachment to host cell</keyword>
<keyword id="KW-0946">Virion</keyword>
<keyword id="KW-1160">Virus entry into host cell</keyword>
<comment type="function">
    <text evidence="1">Forms spikes that protrude from each vertex of the icosahedral capsid. Interacts with host receptor CXCAR to provide virion initial attachment to target cell. Fiber proteins are shed during virus entry, when virus is still at the cell surface (By similarity).</text>
</comment>
<comment type="subunit">
    <text evidence="1">Homotrimer. Interacts with host receptor CXCAR. Interacts (via N-terminal tail region) with pentons (By similarity).</text>
</comment>
<comment type="subcellular location">
    <subcellularLocation>
        <location evidence="1">Virion</location>
    </subcellularLocation>
    <subcellularLocation>
        <location evidence="1">Host nucleus</location>
    </subcellularLocation>
    <text evidence="1">Anchored to the pentons, protrudes from the virion surface.</text>
</comment>
<comment type="induction">
    <text>Expressed in the late phase of the viral replicative cycle.</text>
</comment>
<comment type="domain">
    <text evidence="1">The tail region anchors the fiber to penton base capsomers, whereas the shaft, built from several repeated motifs, allows the knob to protrude from the virion.</text>
</comment>
<comment type="miscellaneous">
    <text evidence="1">All late proteins expressed from the major late promoter are produced by alternative splicing and alternative polyadenylation of the same gene giving rise to non-overlapping ORFs. A leader sequence is present in the N-terminus of all these mRNAs and is recognized by the viral shutoff protein to provide expression although conventional translation via ribosome scanning from the cap has been shut off in the host cell (By similarity).</text>
</comment>
<comment type="similarity">
    <text evidence="2">Belongs to the adenoviridae fiber family.</text>
</comment>
<reference key="1">
    <citation type="journal article" date="1995" name="Virology">
        <title>Characterization of adenovirus subgenus D fiber genes.</title>
        <authorList>
            <person name="Pring-Akerblom P."/>
            <person name="Adrian T."/>
        </authorList>
    </citation>
    <scope>NUCLEOTIDE SEQUENCE [GENOMIC DNA]</scope>
    <source>
        <strain>Isolate 5399</strain>
        <strain>Isolate Morrison</strain>
    </source>
</reference>
<reference key="2">
    <citation type="journal article" date="2005" name="J. Virol.">
        <title>Adenovirus receptors.</title>
        <authorList>
            <person name="Zhang Y."/>
            <person name="Bergelson J.M."/>
        </authorList>
    </citation>
    <scope>REVIEW</scope>
</reference>
<dbReference type="EMBL" id="X74658">
    <property type="protein sequence ID" value="CAA52722.1"/>
    <property type="molecule type" value="Genomic_DNA"/>
</dbReference>
<dbReference type="EMBL" id="X76706">
    <property type="protein sequence ID" value="CAA54127.1"/>
    <property type="molecule type" value="Genomic_DNA"/>
</dbReference>
<dbReference type="PIR" id="S40092">
    <property type="entry name" value="S40092"/>
</dbReference>
<dbReference type="SMR" id="P68983"/>
<dbReference type="GO" id="GO:0042025">
    <property type="term" value="C:host cell nucleus"/>
    <property type="evidence" value="ECO:0007669"/>
    <property type="project" value="UniProtKB-SubCell"/>
</dbReference>
<dbReference type="GO" id="GO:0019028">
    <property type="term" value="C:viral capsid"/>
    <property type="evidence" value="ECO:0007669"/>
    <property type="project" value="UniProtKB-KW"/>
</dbReference>
<dbReference type="GO" id="GO:0098671">
    <property type="term" value="P:adhesion receptor-mediated virion attachment to host cell"/>
    <property type="evidence" value="ECO:0007669"/>
    <property type="project" value="UniProtKB-KW"/>
</dbReference>
<dbReference type="GO" id="GO:0007155">
    <property type="term" value="P:cell adhesion"/>
    <property type="evidence" value="ECO:0007669"/>
    <property type="project" value="InterPro"/>
</dbReference>
<dbReference type="GO" id="GO:0046718">
    <property type="term" value="P:symbiont entry into host cell"/>
    <property type="evidence" value="ECO:0007669"/>
    <property type="project" value="UniProtKB-KW"/>
</dbReference>
<dbReference type="Gene3D" id="6.20.10.20">
    <property type="match status" value="1"/>
</dbReference>
<dbReference type="Gene3D" id="2.60.90.10">
    <property type="entry name" value="Adenovirus pIV-related, attachment domain"/>
    <property type="match status" value="1"/>
</dbReference>
<dbReference type="InterPro" id="IPR000931">
    <property type="entry name" value="Adeno_fibre"/>
</dbReference>
<dbReference type="InterPro" id="IPR000978">
    <property type="entry name" value="Adeno_fibre_knob"/>
</dbReference>
<dbReference type="InterPro" id="IPR008982">
    <property type="entry name" value="Adenovirus_pIV-like_att"/>
</dbReference>
<dbReference type="InterPro" id="IPR009013">
    <property type="entry name" value="Attachment_protein_shaft_sf"/>
</dbReference>
<dbReference type="Pfam" id="PF00541">
    <property type="entry name" value="Adeno_knob"/>
    <property type="match status" value="1"/>
</dbReference>
<dbReference type="PRINTS" id="PR00307">
    <property type="entry name" value="ADENOVSFIBRE"/>
</dbReference>
<dbReference type="SUPFAM" id="SSF51225">
    <property type="entry name" value="Fibre shaft of virus attachment proteins"/>
    <property type="match status" value="2"/>
</dbReference>
<dbReference type="SUPFAM" id="SSF49835">
    <property type="entry name" value="Virus attachment protein globular domain"/>
    <property type="match status" value="1"/>
</dbReference>